<keyword id="KW-0067">ATP-binding</keyword>
<keyword id="KW-0963">Cytoplasm</keyword>
<keyword id="KW-0436">Ligase</keyword>
<keyword id="KW-0547">Nucleotide-binding</keyword>
<accession>A1JPK8</accession>
<proteinExistence type="inferred from homology"/>
<protein>
    <recommendedName>
        <fullName evidence="1">Lipoate-protein ligase A</fullName>
        <ecNumber evidence="1">6.3.1.20</ecNumber>
    </recommendedName>
    <alternativeName>
        <fullName evidence="1">Lipoate--protein ligase</fullName>
    </alternativeName>
</protein>
<evidence type="ECO:0000255" key="1">
    <source>
        <dbReference type="HAMAP-Rule" id="MF_01602"/>
    </source>
</evidence>
<evidence type="ECO:0000255" key="2">
    <source>
        <dbReference type="PROSITE-ProRule" id="PRU01067"/>
    </source>
</evidence>
<gene>
    <name evidence="1" type="primary">lplA</name>
    <name type="ordered locus">YE2184</name>
</gene>
<feature type="chain" id="PRO_1000069391" description="Lipoate-protein ligase A">
    <location>
        <begin position="1"/>
        <end position="338"/>
    </location>
</feature>
<feature type="domain" description="BPL/LPL catalytic" evidence="2">
    <location>
        <begin position="29"/>
        <end position="216"/>
    </location>
</feature>
<feature type="binding site" evidence="1">
    <location>
        <position position="71"/>
    </location>
    <ligand>
        <name>ATP</name>
        <dbReference type="ChEBI" id="CHEBI:30616"/>
    </ligand>
</feature>
<feature type="binding site" evidence="1">
    <location>
        <begin position="76"/>
        <end position="79"/>
    </location>
    <ligand>
        <name>ATP</name>
        <dbReference type="ChEBI" id="CHEBI:30616"/>
    </ligand>
</feature>
<feature type="binding site" evidence="1">
    <location>
        <position position="134"/>
    </location>
    <ligand>
        <name>(R)-lipoate</name>
        <dbReference type="ChEBI" id="CHEBI:83088"/>
    </ligand>
</feature>
<feature type="binding site" evidence="1">
    <location>
        <position position="134"/>
    </location>
    <ligand>
        <name>ATP</name>
        <dbReference type="ChEBI" id="CHEBI:30616"/>
    </ligand>
</feature>
<reference key="1">
    <citation type="journal article" date="2006" name="PLoS Genet.">
        <title>The complete genome sequence and comparative genome analysis of the high pathogenicity Yersinia enterocolitica strain 8081.</title>
        <authorList>
            <person name="Thomson N.R."/>
            <person name="Howard S."/>
            <person name="Wren B.W."/>
            <person name="Holden M.T.G."/>
            <person name="Crossman L."/>
            <person name="Challis G.L."/>
            <person name="Churcher C."/>
            <person name="Mungall K."/>
            <person name="Brooks K."/>
            <person name="Chillingworth T."/>
            <person name="Feltwell T."/>
            <person name="Abdellah Z."/>
            <person name="Hauser H."/>
            <person name="Jagels K."/>
            <person name="Maddison M."/>
            <person name="Moule S."/>
            <person name="Sanders M."/>
            <person name="Whitehead S."/>
            <person name="Quail M.A."/>
            <person name="Dougan G."/>
            <person name="Parkhill J."/>
            <person name="Prentice M.B."/>
        </authorList>
    </citation>
    <scope>NUCLEOTIDE SEQUENCE [LARGE SCALE GENOMIC DNA]</scope>
    <source>
        <strain>NCTC 13174 / 8081</strain>
    </source>
</reference>
<organism>
    <name type="scientific">Yersinia enterocolitica serotype O:8 / biotype 1B (strain NCTC 13174 / 8081)</name>
    <dbReference type="NCBI Taxonomy" id="393305"/>
    <lineage>
        <taxon>Bacteria</taxon>
        <taxon>Pseudomonadati</taxon>
        <taxon>Pseudomonadota</taxon>
        <taxon>Gammaproteobacteria</taxon>
        <taxon>Enterobacterales</taxon>
        <taxon>Yersiniaceae</taxon>
        <taxon>Yersinia</taxon>
    </lineage>
</organism>
<name>LPLA_YERE8</name>
<dbReference type="EC" id="6.3.1.20" evidence="1"/>
<dbReference type="EMBL" id="AM286415">
    <property type="protein sequence ID" value="CAL12254.1"/>
    <property type="molecule type" value="Genomic_DNA"/>
</dbReference>
<dbReference type="RefSeq" id="WP_005161531.1">
    <property type="nucleotide sequence ID" value="NC_008800.1"/>
</dbReference>
<dbReference type="RefSeq" id="YP_001006424.1">
    <property type="nucleotide sequence ID" value="NC_008800.1"/>
</dbReference>
<dbReference type="SMR" id="A1JPK8"/>
<dbReference type="KEGG" id="yen:YE2184"/>
<dbReference type="PATRIC" id="fig|393305.7.peg.2349"/>
<dbReference type="eggNOG" id="COG0095">
    <property type="taxonomic scope" value="Bacteria"/>
</dbReference>
<dbReference type="HOGENOM" id="CLU_022986_0_1_6"/>
<dbReference type="OrthoDB" id="9787898at2"/>
<dbReference type="UniPathway" id="UPA00537">
    <property type="reaction ID" value="UER00594"/>
</dbReference>
<dbReference type="UniPathway" id="UPA00537">
    <property type="reaction ID" value="UER00595"/>
</dbReference>
<dbReference type="Proteomes" id="UP000000642">
    <property type="component" value="Chromosome"/>
</dbReference>
<dbReference type="GO" id="GO:0005829">
    <property type="term" value="C:cytosol"/>
    <property type="evidence" value="ECO:0007669"/>
    <property type="project" value="TreeGrafter"/>
</dbReference>
<dbReference type="GO" id="GO:0005524">
    <property type="term" value="F:ATP binding"/>
    <property type="evidence" value="ECO:0007669"/>
    <property type="project" value="UniProtKB-KW"/>
</dbReference>
<dbReference type="GO" id="GO:0016979">
    <property type="term" value="F:lipoate-protein ligase activity"/>
    <property type="evidence" value="ECO:0007669"/>
    <property type="project" value="UniProtKB-UniRule"/>
</dbReference>
<dbReference type="GO" id="GO:0017118">
    <property type="term" value="F:lipoyltransferase activity"/>
    <property type="evidence" value="ECO:0007669"/>
    <property type="project" value="TreeGrafter"/>
</dbReference>
<dbReference type="GO" id="GO:0036211">
    <property type="term" value="P:protein modification process"/>
    <property type="evidence" value="ECO:0007669"/>
    <property type="project" value="InterPro"/>
</dbReference>
<dbReference type="CDD" id="cd16443">
    <property type="entry name" value="LplA"/>
    <property type="match status" value="1"/>
</dbReference>
<dbReference type="FunFam" id="3.30.930.10:FF:000024">
    <property type="entry name" value="Lipoate-protein ligase A"/>
    <property type="match status" value="1"/>
</dbReference>
<dbReference type="Gene3D" id="3.30.930.10">
    <property type="entry name" value="Bira Bifunctional Protein, Domain 2"/>
    <property type="match status" value="1"/>
</dbReference>
<dbReference type="Gene3D" id="3.30.390.50">
    <property type="entry name" value="CO dehydrogenase flavoprotein, C-terminal domain"/>
    <property type="match status" value="1"/>
</dbReference>
<dbReference type="HAMAP" id="MF_01602">
    <property type="entry name" value="LplA"/>
    <property type="match status" value="1"/>
</dbReference>
<dbReference type="InterPro" id="IPR045864">
    <property type="entry name" value="aa-tRNA-synth_II/BPL/LPL"/>
</dbReference>
<dbReference type="InterPro" id="IPR004143">
    <property type="entry name" value="BPL_LPL_catalytic"/>
</dbReference>
<dbReference type="InterPro" id="IPR023741">
    <property type="entry name" value="Lipoate_ligase_A"/>
</dbReference>
<dbReference type="InterPro" id="IPR019491">
    <property type="entry name" value="Lipoate_protein_ligase_C"/>
</dbReference>
<dbReference type="InterPro" id="IPR004562">
    <property type="entry name" value="LipoylTrfase_LipoateP_Ligase"/>
</dbReference>
<dbReference type="NCBIfam" id="TIGR00545">
    <property type="entry name" value="lipoyltrans"/>
    <property type="match status" value="1"/>
</dbReference>
<dbReference type="PANTHER" id="PTHR12561">
    <property type="entry name" value="LIPOATE-PROTEIN LIGASE"/>
    <property type="match status" value="1"/>
</dbReference>
<dbReference type="PANTHER" id="PTHR12561:SF3">
    <property type="entry name" value="LIPOYLTRANSFERASE 1, MITOCHONDRIAL"/>
    <property type="match status" value="1"/>
</dbReference>
<dbReference type="Pfam" id="PF10437">
    <property type="entry name" value="Lip_prot_lig_C"/>
    <property type="match status" value="1"/>
</dbReference>
<dbReference type="Pfam" id="PF21948">
    <property type="entry name" value="LplA-B_cat"/>
    <property type="match status" value="1"/>
</dbReference>
<dbReference type="SUPFAM" id="SSF55681">
    <property type="entry name" value="Class II aaRS and biotin synthetases"/>
    <property type="match status" value="1"/>
</dbReference>
<dbReference type="SUPFAM" id="SSF82649">
    <property type="entry name" value="SufE/NifU"/>
    <property type="match status" value="1"/>
</dbReference>
<dbReference type="PROSITE" id="PS51733">
    <property type="entry name" value="BPL_LPL_CATALYTIC"/>
    <property type="match status" value="1"/>
</dbReference>
<comment type="function">
    <text evidence="1">Catalyzes both the ATP-dependent activation of exogenously supplied lipoate to lipoyl-AMP and the transfer of the activated lipoyl onto the lipoyl domains of lipoate-dependent enzymes.</text>
</comment>
<comment type="catalytic activity">
    <reaction evidence="1">
        <text>L-lysyl-[lipoyl-carrier protein] + (R)-lipoate + ATP = N(6)-[(R)-lipoyl]-L-lysyl-[lipoyl-carrier protein] + AMP + diphosphate + H(+)</text>
        <dbReference type="Rhea" id="RHEA:49288"/>
        <dbReference type="Rhea" id="RHEA-COMP:10500"/>
        <dbReference type="Rhea" id="RHEA-COMP:10502"/>
        <dbReference type="ChEBI" id="CHEBI:15378"/>
        <dbReference type="ChEBI" id="CHEBI:29969"/>
        <dbReference type="ChEBI" id="CHEBI:30616"/>
        <dbReference type="ChEBI" id="CHEBI:33019"/>
        <dbReference type="ChEBI" id="CHEBI:83088"/>
        <dbReference type="ChEBI" id="CHEBI:83099"/>
        <dbReference type="ChEBI" id="CHEBI:456215"/>
        <dbReference type="EC" id="6.3.1.20"/>
    </reaction>
</comment>
<comment type="pathway">
    <text evidence="1">Protein modification; protein lipoylation via exogenous pathway; protein N(6)-(lipoyl)lysine from lipoate: step 1/2.</text>
</comment>
<comment type="pathway">
    <text evidence="1">Protein modification; protein lipoylation via exogenous pathway; protein N(6)-(lipoyl)lysine from lipoate: step 2/2.</text>
</comment>
<comment type="subunit">
    <text evidence="1">Monomer.</text>
</comment>
<comment type="subcellular location">
    <subcellularLocation>
        <location evidence="1">Cytoplasm</location>
    </subcellularLocation>
</comment>
<comment type="miscellaneous">
    <text evidence="1">In the transfer reaction, the free carboxyl group of lipoic acid is attached via an amide linkage to the epsilon-amino group of a specific lysine residue of lipoyl domains of lipoate-dependent enzymes.</text>
</comment>
<comment type="similarity">
    <text evidence="1">Belongs to the LplA family.</text>
</comment>
<sequence length="338" mass="37893">MSSLRLLISDSYDPWFNLAVEECIFRQMSPDQRVLFLWRNADTVVIGRAQNPWKECNTRRMEQDGVKLARRSSGGGAVFHDLGNTCFTFMAGKPEYDKTISTQIILNALASLGIQATASGRNDLVVIKDDGERKVSGSAYKETKDRGFHHGTLLLNADLNRLADYLNPDPKKLQAKGITSVRSRVTNLVELLPGINHEKICAAIEQAFFNYYDEKVFAEIISPQALPDLPGFAEQFAKQSSWEWNFGQAPAFSHLVDTRFVWGGIELHFDVLHGAIDRCQIFTDSLNPAPLEALAERLQGVEYRPAAIDAVCLQLSDDFPESQAELLQVQCWLAEVLR</sequence>